<sequence>MTTQVPKRLRQPIVVVLGHVDHGKTTLLDKIRGTAVVKKEPGEMTQEVGASFVPTSVIEKISEPLKKSFPIKLEIPGLLFIDTPGHELFSNLRKRGGSVADIAILVVDIVEGIQKQTLESIEILKSRKVPFIVAANKIDRINGWKAQDTYSFLESINKQEQRVRDNLDKQVYNLVIQLAEQGFNAERFDRIRDFTKTVAIIPVSAKTGEGIAEVLAILAGLTQNYMKNKLKFAEGPAKGVILEVKELQGLGYTADVVIYEGILRKNDIIVLAGIDGPIVTKVRAILVPRPLQDIKLAKSDLAQIDEVYAASGVKVYAQNLETALAGSPIYVAENNEEVEKYKKIIQEEVSAVRYYNSSVYGIIVKADSLGSLEAIVSSLERRNIPIRLADIGPISKRDITEAEIVAEKAKEYGIIAAFRVKPLSGIEIPEKIKLISDDIIYQLMDNIEKYIEDIKESEKRKTLETIVLPGKIKIIPGYVFRRSDPVIVGVEVLGGIIRPKYGLIKKDGRRVGEVLQIQDNKKSVDRASKGMEVAVSIKGNIMVGRQVEEGEVLYTDVPKEDLQILMEKYKDIVTDDMIEVIKEIIRIKRTQDATYGLGLQFQ</sequence>
<gene>
    <name type="primary">infB</name>
    <name type="ordered locus">Saci_0695</name>
</gene>
<proteinExistence type="inferred from homology"/>
<evidence type="ECO:0000250" key="1"/>
<evidence type="ECO:0000305" key="2"/>
<protein>
    <recommendedName>
        <fullName>Probable translation initiation factor IF-2</fullName>
    </recommendedName>
</protein>
<name>IF2P_SULAC</name>
<feature type="chain" id="PRO_0000137307" description="Probable translation initiation factor IF-2">
    <location>
        <begin position="1"/>
        <end position="602"/>
    </location>
</feature>
<feature type="domain" description="tr-type G">
    <location>
        <begin position="9"/>
        <end position="229"/>
    </location>
</feature>
<feature type="region of interest" description="G1" evidence="1">
    <location>
        <begin position="18"/>
        <end position="25"/>
    </location>
</feature>
<feature type="region of interest" description="G2" evidence="1">
    <location>
        <begin position="43"/>
        <end position="47"/>
    </location>
</feature>
<feature type="region of interest" description="G3" evidence="1">
    <location>
        <begin position="82"/>
        <end position="85"/>
    </location>
</feature>
<feature type="region of interest" description="G4" evidence="1">
    <location>
        <begin position="136"/>
        <end position="139"/>
    </location>
</feature>
<feature type="region of interest" description="G5" evidence="1">
    <location>
        <begin position="204"/>
        <end position="206"/>
    </location>
</feature>
<feature type="binding site" evidence="1">
    <location>
        <begin position="18"/>
        <end position="25"/>
    </location>
    <ligand>
        <name>GTP</name>
        <dbReference type="ChEBI" id="CHEBI:37565"/>
    </ligand>
</feature>
<feature type="binding site" evidence="1">
    <location>
        <begin position="82"/>
        <end position="86"/>
    </location>
    <ligand>
        <name>GTP</name>
        <dbReference type="ChEBI" id="CHEBI:37565"/>
    </ligand>
</feature>
<feature type="binding site" evidence="1">
    <location>
        <begin position="136"/>
        <end position="139"/>
    </location>
    <ligand>
        <name>GTP</name>
        <dbReference type="ChEBI" id="CHEBI:37565"/>
    </ligand>
</feature>
<feature type="sequence conflict" description="In Ref. 2; AAB41057." evidence="2" ref="2">
    <original>Y</original>
    <variation>H</variation>
    <location>
        <position position="150"/>
    </location>
</feature>
<feature type="sequence conflict" description="In Ref. 2; AAB41057." evidence="2" ref="2">
    <original>K</original>
    <variation>R</variation>
    <location>
        <position position="196"/>
    </location>
</feature>
<feature type="sequence conflict" description="In Ref. 2; AAB41057." evidence="2" ref="2">
    <original>I</original>
    <variation>V</variation>
    <location>
        <position position="200"/>
    </location>
</feature>
<feature type="sequence conflict" description="In Ref. 2; AAB41057." evidence="2" ref="2">
    <original>K</original>
    <variation>E</variation>
    <location>
        <position position="295"/>
    </location>
</feature>
<feature type="sequence conflict" description="In Ref. 2." evidence="2" ref="2">
    <original>VDRASKGMEVA</original>
    <variation>LVSCYYERNKP</variation>
    <location>
        <begin position="524"/>
        <end position="534"/>
    </location>
</feature>
<accession>P95691</accession>
<accession>Q4JAV4</accession>
<organism>
    <name type="scientific">Sulfolobus acidocaldarius (strain ATCC 33909 / DSM 639 / JCM 8929 / NBRC 15157 / NCIMB 11770)</name>
    <dbReference type="NCBI Taxonomy" id="330779"/>
    <lineage>
        <taxon>Archaea</taxon>
        <taxon>Thermoproteota</taxon>
        <taxon>Thermoprotei</taxon>
        <taxon>Sulfolobales</taxon>
        <taxon>Sulfolobaceae</taxon>
        <taxon>Sulfolobus</taxon>
    </lineage>
</organism>
<keyword id="KW-0342">GTP-binding</keyword>
<keyword id="KW-0396">Initiation factor</keyword>
<keyword id="KW-0547">Nucleotide-binding</keyword>
<keyword id="KW-0648">Protein biosynthesis</keyword>
<keyword id="KW-1185">Reference proteome</keyword>
<dbReference type="EMBL" id="CP000077">
    <property type="protein sequence ID" value="AAY80075.1"/>
    <property type="molecule type" value="Genomic_DNA"/>
</dbReference>
<dbReference type="EMBL" id="U43413">
    <property type="protein sequence ID" value="AAB41057.1"/>
    <property type="molecule type" value="Genomic_DNA"/>
</dbReference>
<dbReference type="RefSeq" id="WP_011277577.1">
    <property type="nucleotide sequence ID" value="NC_007181.1"/>
</dbReference>
<dbReference type="SMR" id="P95691"/>
<dbReference type="STRING" id="330779.Saci_0695"/>
<dbReference type="GeneID" id="14551210"/>
<dbReference type="GeneID" id="78441037"/>
<dbReference type="KEGG" id="sai:Saci_0695"/>
<dbReference type="PATRIC" id="fig|330779.12.peg.663"/>
<dbReference type="eggNOG" id="arCOG01560">
    <property type="taxonomic scope" value="Archaea"/>
</dbReference>
<dbReference type="HOGENOM" id="CLU_002656_3_3_2"/>
<dbReference type="Proteomes" id="UP000001018">
    <property type="component" value="Chromosome"/>
</dbReference>
<dbReference type="GO" id="GO:0005737">
    <property type="term" value="C:cytoplasm"/>
    <property type="evidence" value="ECO:0007669"/>
    <property type="project" value="TreeGrafter"/>
</dbReference>
<dbReference type="GO" id="GO:0005525">
    <property type="term" value="F:GTP binding"/>
    <property type="evidence" value="ECO:0007669"/>
    <property type="project" value="UniProtKB-KW"/>
</dbReference>
<dbReference type="GO" id="GO:0003924">
    <property type="term" value="F:GTPase activity"/>
    <property type="evidence" value="ECO:0007669"/>
    <property type="project" value="UniProtKB-UniRule"/>
</dbReference>
<dbReference type="GO" id="GO:0003743">
    <property type="term" value="F:translation initiation factor activity"/>
    <property type="evidence" value="ECO:0007669"/>
    <property type="project" value="UniProtKB-UniRule"/>
</dbReference>
<dbReference type="CDD" id="cd03703">
    <property type="entry name" value="aeIF5B_II"/>
    <property type="match status" value="1"/>
</dbReference>
<dbReference type="CDD" id="cd16266">
    <property type="entry name" value="IF2_aeIF5B_IV"/>
    <property type="match status" value="1"/>
</dbReference>
<dbReference type="CDD" id="cd01887">
    <property type="entry name" value="IF2_eIF5B"/>
    <property type="match status" value="1"/>
</dbReference>
<dbReference type="FunFam" id="3.40.50.300:FF:000112">
    <property type="entry name" value="Eukaryotic translation initiation factor 5B"/>
    <property type="match status" value="1"/>
</dbReference>
<dbReference type="FunFam" id="2.40.30.10:FF:000013">
    <property type="entry name" value="eukaryotic translation initiation factor 5B"/>
    <property type="match status" value="1"/>
</dbReference>
<dbReference type="FunFam" id="2.40.30.10:FF:000152">
    <property type="entry name" value="Probable translation initiation factor IF-2"/>
    <property type="match status" value="1"/>
</dbReference>
<dbReference type="Gene3D" id="3.40.50.300">
    <property type="entry name" value="P-loop containing nucleotide triphosphate hydrolases"/>
    <property type="match status" value="1"/>
</dbReference>
<dbReference type="Gene3D" id="2.40.30.10">
    <property type="entry name" value="Translation factors"/>
    <property type="match status" value="2"/>
</dbReference>
<dbReference type="Gene3D" id="3.40.50.10050">
    <property type="entry name" value="Translation initiation factor IF- 2, domain 3"/>
    <property type="match status" value="1"/>
</dbReference>
<dbReference type="HAMAP" id="MF_00100_A">
    <property type="entry name" value="IF_2_A"/>
    <property type="match status" value="1"/>
</dbReference>
<dbReference type="InterPro" id="IPR029459">
    <property type="entry name" value="EFTU-type"/>
</dbReference>
<dbReference type="InterPro" id="IPR027417">
    <property type="entry name" value="P-loop_NTPase"/>
</dbReference>
<dbReference type="InterPro" id="IPR005225">
    <property type="entry name" value="Small_GTP-bd"/>
</dbReference>
<dbReference type="InterPro" id="IPR000795">
    <property type="entry name" value="T_Tr_GTP-bd_dom"/>
</dbReference>
<dbReference type="InterPro" id="IPR004544">
    <property type="entry name" value="TF_aIF-2_arc"/>
</dbReference>
<dbReference type="InterPro" id="IPR015760">
    <property type="entry name" value="TIF_IF2"/>
</dbReference>
<dbReference type="InterPro" id="IPR023115">
    <property type="entry name" value="TIF_IF2_dom3"/>
</dbReference>
<dbReference type="InterPro" id="IPR036925">
    <property type="entry name" value="TIF_IF2_dom3_sf"/>
</dbReference>
<dbReference type="InterPro" id="IPR009000">
    <property type="entry name" value="Transl_B-barrel_sf"/>
</dbReference>
<dbReference type="NCBIfam" id="TIGR00491">
    <property type="entry name" value="aIF-2"/>
    <property type="match status" value="1"/>
</dbReference>
<dbReference type="NCBIfam" id="NF003078">
    <property type="entry name" value="PRK04004.1"/>
    <property type="match status" value="1"/>
</dbReference>
<dbReference type="NCBIfam" id="TIGR00231">
    <property type="entry name" value="small_GTP"/>
    <property type="match status" value="1"/>
</dbReference>
<dbReference type="PANTHER" id="PTHR43381:SF4">
    <property type="entry name" value="EUKARYOTIC TRANSLATION INITIATION FACTOR 5B"/>
    <property type="match status" value="1"/>
</dbReference>
<dbReference type="PANTHER" id="PTHR43381">
    <property type="entry name" value="TRANSLATION INITIATION FACTOR IF-2-RELATED"/>
    <property type="match status" value="1"/>
</dbReference>
<dbReference type="Pfam" id="PF00009">
    <property type="entry name" value="GTP_EFTU"/>
    <property type="match status" value="1"/>
</dbReference>
<dbReference type="Pfam" id="PF14578">
    <property type="entry name" value="GTP_EFTU_D4"/>
    <property type="match status" value="1"/>
</dbReference>
<dbReference type="Pfam" id="PF11987">
    <property type="entry name" value="IF-2"/>
    <property type="match status" value="1"/>
</dbReference>
<dbReference type="PRINTS" id="PR00315">
    <property type="entry name" value="ELONGATNFCT"/>
</dbReference>
<dbReference type="SUPFAM" id="SSF52156">
    <property type="entry name" value="Initiation factor IF2/eIF5b, domain 3"/>
    <property type="match status" value="1"/>
</dbReference>
<dbReference type="SUPFAM" id="SSF52540">
    <property type="entry name" value="P-loop containing nucleoside triphosphate hydrolases"/>
    <property type="match status" value="1"/>
</dbReference>
<dbReference type="SUPFAM" id="SSF50447">
    <property type="entry name" value="Translation proteins"/>
    <property type="match status" value="1"/>
</dbReference>
<dbReference type="PROSITE" id="PS51722">
    <property type="entry name" value="G_TR_2"/>
    <property type="match status" value="1"/>
</dbReference>
<reference key="1">
    <citation type="journal article" date="2005" name="J. Bacteriol.">
        <title>The genome of Sulfolobus acidocaldarius, a model organism of the Crenarchaeota.</title>
        <authorList>
            <person name="Chen L."/>
            <person name="Bruegger K."/>
            <person name="Skovgaard M."/>
            <person name="Redder P."/>
            <person name="She Q."/>
            <person name="Torarinsson E."/>
            <person name="Greve B."/>
            <person name="Awayez M."/>
            <person name="Zibat A."/>
            <person name="Klenk H.-P."/>
            <person name="Garrett R.A."/>
        </authorList>
    </citation>
    <scope>NUCLEOTIDE SEQUENCE [LARGE SCALE GENOMIC DNA]</scope>
    <source>
        <strain>ATCC 33909 / DSM 639 / JCM 8929 / NBRC 15157 / NCIMB 11770</strain>
    </source>
</reference>
<reference key="2">
    <citation type="journal article" date="1996" name="Syst. Appl. Microbiol.">
        <title>An infB-homologue in Sulfolobus acidocaldarius.</title>
        <authorList>
            <person name="Keeling P.J."/>
            <person name="Baldauf S.L."/>
            <person name="Doolittle W.F."/>
            <person name="Zillig W."/>
            <person name="Klenk H.-P."/>
        </authorList>
    </citation>
    <scope>NUCLEOTIDE SEQUENCE [GENOMIC DNA] OF 1-552</scope>
</reference>
<comment type="function">
    <text evidence="1">Function in general translation initiation by promoting the binding of the formylmethionine-tRNA to ribosomes. Seems to function along with eIF-2 (By similarity).</text>
</comment>
<comment type="similarity">
    <text evidence="2">Belongs to the TRAFAC class translation factor GTPase superfamily. Classic translation factor GTPase family. IF-2 subfamily.</text>
</comment>